<reference key="1">
    <citation type="journal article" date="1994" name="Curr. Top. Microbiol. Immunol.">
        <title>Primer-directed sequencing of human papillomavirus types.</title>
        <authorList>
            <person name="Delius H."/>
            <person name="Hofmann B."/>
        </authorList>
    </citation>
    <scope>NUCLEOTIDE SEQUENCE [GENOMIC DNA]</scope>
</reference>
<accession>P36754</accession>
<keyword id="KW-0167">Capsid protein</keyword>
<keyword id="KW-1176">Cytoplasmic inwards viral transport</keyword>
<keyword id="KW-1015">Disulfide bond</keyword>
<keyword id="KW-0238">DNA-binding</keyword>
<keyword id="KW-1039">Host endosome</keyword>
<keyword id="KW-1040">Host Golgi apparatus</keyword>
<keyword id="KW-1048">Host nucleus</keyword>
<keyword id="KW-0945">Host-virus interaction</keyword>
<keyword id="KW-0426">Late protein</keyword>
<keyword id="KW-1177">Microtubular inwards viral transport</keyword>
<keyword id="KW-0597">Phosphoprotein</keyword>
<keyword id="KW-1185">Reference proteome</keyword>
<keyword id="KW-1163">Viral penetration into host nucleus</keyword>
<keyword id="KW-0946">Virion</keyword>
<keyword id="KW-1160">Virus entry into host cell</keyword>
<sequence length="472" mass="50613">MVAVRAPRRKRASATDLYKTCKAAGTCPPDVIPKIEGSTLADKILQWSGLGIFLGGLGIGTGTGSGGRTGYIPLGGGGRPSVVDIGPTRPPIIIEPVGPTEPSIVTLVEESSIIQSGAPIPTFSGGNGFELTTSSATTPAVLDITPSAGTVHVTSTNIQNPLYIEPPIDIPQAGEASGHIFTTTSTAGTHSYEEIPMEVFASTNGTGLEPISSTPIPGIQRVSAPRLYSKAYQQVKVTDPNFIGNPSTFVTFDNPAYEPIDETLTYASSSTVAPDPDFLDIIALHRPALTSRKGTVRYSRLGQKATMKTRSGKQIGATVHYYHDISPIQSFAEHEEIELQPLHTSTHSSAPLFDIYADPDTVPSIHTPRMSYSPTTLPVPRYASNVFSSINTSTTNVTVPLSTSFELPVYSGSDIYTPTSSPTWPSLPPPPTTNLPAIVVHGDNYYLWPYIYLIHKRRKRMPYFFSDGFVAY</sequence>
<gene>
    <name evidence="1" type="primary">L2</name>
</gene>
<feature type="chain" id="PRO_0000133593" description="Minor capsid protein L2">
    <location>
        <begin position="1"/>
        <end position="472"/>
    </location>
</feature>
<feature type="short sequence motif" description="Nuclear localization signal" evidence="1">
    <location>
        <begin position="1"/>
        <end position="12"/>
    </location>
</feature>
<feature type="short sequence motif" description="Nuclear localization signal" evidence="1">
    <location>
        <begin position="453"/>
        <end position="461"/>
    </location>
</feature>
<feature type="disulfide bond" evidence="1">
    <location>
        <begin position="21"/>
        <end position="27"/>
    </location>
</feature>
<dbReference type="EMBL" id="X74472">
    <property type="protein sequence ID" value="CAA52534.1"/>
    <property type="molecule type" value="Genomic_DNA"/>
</dbReference>
<dbReference type="PIR" id="S36548">
    <property type="entry name" value="S36548"/>
</dbReference>
<dbReference type="RefSeq" id="NP_041786.1">
    <property type="nucleotide sequence ID" value="NC_001583.1"/>
</dbReference>
<dbReference type="SMR" id="P36754"/>
<dbReference type="GeneID" id="1496949"/>
<dbReference type="KEGG" id="vg:1496949"/>
<dbReference type="OrthoDB" id="8047at10239"/>
<dbReference type="Proteomes" id="UP000009113">
    <property type="component" value="Genome"/>
</dbReference>
<dbReference type="GO" id="GO:0043657">
    <property type="term" value="C:host cell"/>
    <property type="evidence" value="ECO:0007669"/>
    <property type="project" value="GOC"/>
</dbReference>
<dbReference type="GO" id="GO:0044174">
    <property type="term" value="C:host cell endosome"/>
    <property type="evidence" value="ECO:0007669"/>
    <property type="project" value="UniProtKB-KW"/>
</dbReference>
<dbReference type="GO" id="GO:0044177">
    <property type="term" value="C:host cell Golgi apparatus"/>
    <property type="evidence" value="ECO:0007669"/>
    <property type="project" value="UniProtKB-SubCell"/>
</dbReference>
<dbReference type="GO" id="GO:0042025">
    <property type="term" value="C:host cell nucleus"/>
    <property type="evidence" value="ECO:0007669"/>
    <property type="project" value="UniProtKB-SubCell"/>
</dbReference>
<dbReference type="GO" id="GO:0019028">
    <property type="term" value="C:viral capsid"/>
    <property type="evidence" value="ECO:0007669"/>
    <property type="project" value="UniProtKB-UniRule"/>
</dbReference>
<dbReference type="GO" id="GO:0003677">
    <property type="term" value="F:DNA binding"/>
    <property type="evidence" value="ECO:0007669"/>
    <property type="project" value="UniProtKB-UniRule"/>
</dbReference>
<dbReference type="GO" id="GO:0005198">
    <property type="term" value="F:structural molecule activity"/>
    <property type="evidence" value="ECO:0007669"/>
    <property type="project" value="UniProtKB-UniRule"/>
</dbReference>
<dbReference type="GO" id="GO:0075521">
    <property type="term" value="P:microtubule-dependent intracellular transport of viral material towards nucleus"/>
    <property type="evidence" value="ECO:0007669"/>
    <property type="project" value="UniProtKB-UniRule"/>
</dbReference>
<dbReference type="GO" id="GO:0046718">
    <property type="term" value="P:symbiont entry into host cell"/>
    <property type="evidence" value="ECO:0007669"/>
    <property type="project" value="UniProtKB-KW"/>
</dbReference>
<dbReference type="GO" id="GO:0075732">
    <property type="term" value="P:viral penetration into host nucleus"/>
    <property type="evidence" value="ECO:0007669"/>
    <property type="project" value="UniProtKB-KW"/>
</dbReference>
<dbReference type="HAMAP" id="MF_04003">
    <property type="entry name" value="PPV_L2"/>
    <property type="match status" value="1"/>
</dbReference>
<dbReference type="InterPro" id="IPR000784">
    <property type="entry name" value="Late_L2"/>
</dbReference>
<dbReference type="Pfam" id="PF00513">
    <property type="entry name" value="Late_protein_L2"/>
    <property type="match status" value="1"/>
</dbReference>
<name>VL2_HPV26</name>
<organismHost>
    <name type="scientific">Homo sapiens</name>
    <name type="common">Human</name>
    <dbReference type="NCBI Taxonomy" id="9606"/>
</organismHost>
<comment type="function">
    <text evidence="1">Minor protein of the capsid that localizes along the inner surface of the virion, within the central cavities beneath the L1 pentamers. Plays a role in capsid stabilization through interaction with the major capsid protein L1. Once the virion enters the host cell, L2 escorts the genomic DNA into the nucleus by promoting escape from the endosomal compartments and traffic through the host Golgi network. Mechanistically, the C-terminus of L2 possesses a cell-penetrating peptide that protudes from the host endosome, interacts with host cytoplasmic retromer cargo and thereby mediates the capsid delivery to the host trans-Golgi network. Plays a role through its interaction with host dynein in the intracellular microtubule-dependent transport of viral capsid toward the nucleus. Mediates the viral genome import into the nucleus through binding to host importins. Once within the nucleus, L2 localizes viral genomes to host PML bodies in order to activate early gene expression for establishment of infection. Later on, promotes late gene expression by interacting with the viral E2 protein and by inhibiting its transcriptional activation functions. During virion assembly, encapsidates the genome by direct interaction with the viral DNA.</text>
</comment>
<comment type="subunit">
    <text evidence="1">Interacts with major capsid protein L1. Interacts with E2; this interaction inhibits E2 transcriptional activity but not the DNA replication function E2. Interacts with host GADD45GIP1. Interacts with host HSPA8; this interaction is required for L2 nuclear translocation. Interacts with host importins KPNB2 and KPNB3. Forms a complex with importin alpha2-beta1 heterodimers via interaction with the importin alpha2 adapter. Interacts with host DYNLT1; this interaction is essential for virus intracellular transport during entry. Interacts (via C-terminus) with host retromer subunits VPS35 and VPS29.</text>
</comment>
<comment type="subcellular location">
    <subcellularLocation>
        <location evidence="1">Virion</location>
    </subcellularLocation>
    <subcellularLocation>
        <location evidence="1">Host nucleus</location>
    </subcellularLocation>
    <subcellularLocation>
        <location evidence="1">Host early endosome</location>
    </subcellularLocation>
    <subcellularLocation>
        <location evidence="1">Host Golgi apparatus</location>
    </subcellularLocation>
</comment>
<comment type="PTM">
    <text evidence="1">Highly phosphorylated.</text>
</comment>
<comment type="similarity">
    <text evidence="1">Belongs to the papillomaviridae L2 protein family.</text>
</comment>
<organism>
    <name type="scientific">Human papillomavirus type 26</name>
    <dbReference type="NCBI Taxonomy" id="333762"/>
    <lineage>
        <taxon>Viruses</taxon>
        <taxon>Monodnaviria</taxon>
        <taxon>Shotokuvirae</taxon>
        <taxon>Cossaviricota</taxon>
        <taxon>Papovaviricetes</taxon>
        <taxon>Zurhausenvirales</taxon>
        <taxon>Papillomaviridae</taxon>
        <taxon>Firstpapillomavirinae</taxon>
        <taxon>Alphapapillomavirus</taxon>
        <taxon>Alphapapillomavirus 5</taxon>
    </lineage>
</organism>
<protein>
    <recommendedName>
        <fullName evidence="1">Minor capsid protein L2</fullName>
    </recommendedName>
</protein>
<evidence type="ECO:0000255" key="1">
    <source>
        <dbReference type="HAMAP-Rule" id="MF_04003"/>
    </source>
</evidence>
<proteinExistence type="inferred from homology"/>